<feature type="chain" id="PRO_1000184967" description="tRNA N6-adenosine threonylcarbamoyltransferase">
    <location>
        <begin position="1"/>
        <end position="344"/>
    </location>
</feature>
<feature type="binding site" evidence="1">
    <location>
        <position position="111"/>
    </location>
    <ligand>
        <name>Fe cation</name>
        <dbReference type="ChEBI" id="CHEBI:24875"/>
    </ligand>
</feature>
<feature type="binding site" evidence="1">
    <location>
        <position position="115"/>
    </location>
    <ligand>
        <name>Fe cation</name>
        <dbReference type="ChEBI" id="CHEBI:24875"/>
    </ligand>
</feature>
<feature type="binding site" evidence="1">
    <location>
        <begin position="134"/>
        <end position="138"/>
    </location>
    <ligand>
        <name>substrate</name>
    </ligand>
</feature>
<feature type="binding site" evidence="1">
    <location>
        <position position="167"/>
    </location>
    <ligand>
        <name>substrate</name>
    </ligand>
</feature>
<feature type="binding site" evidence="1">
    <location>
        <position position="180"/>
    </location>
    <ligand>
        <name>substrate</name>
    </ligand>
</feature>
<feature type="binding site" evidence="1">
    <location>
        <position position="277"/>
    </location>
    <ligand>
        <name>substrate</name>
    </ligand>
</feature>
<feature type="binding site" evidence="1">
    <location>
        <position position="305"/>
    </location>
    <ligand>
        <name>Fe cation</name>
        <dbReference type="ChEBI" id="CHEBI:24875"/>
    </ligand>
</feature>
<proteinExistence type="inferred from homology"/>
<keyword id="KW-0012">Acyltransferase</keyword>
<keyword id="KW-0963">Cytoplasm</keyword>
<keyword id="KW-0408">Iron</keyword>
<keyword id="KW-0479">Metal-binding</keyword>
<keyword id="KW-1185">Reference proteome</keyword>
<keyword id="KW-0808">Transferase</keyword>
<keyword id="KW-0819">tRNA processing</keyword>
<gene>
    <name evidence="1" type="primary">tsaD</name>
    <name type="synonym">gcp</name>
    <name type="ordered locus">HAPS_1935</name>
</gene>
<dbReference type="EC" id="2.3.1.234" evidence="1"/>
<dbReference type="EMBL" id="CP001321">
    <property type="protein sequence ID" value="ACL33419.1"/>
    <property type="molecule type" value="Genomic_DNA"/>
</dbReference>
<dbReference type="RefSeq" id="WP_015939987.1">
    <property type="nucleotide sequence ID" value="NC_011852.1"/>
</dbReference>
<dbReference type="SMR" id="B8F7W7"/>
<dbReference type="STRING" id="557723.HAPS_1935"/>
<dbReference type="KEGG" id="hap:HAPS_1935"/>
<dbReference type="PATRIC" id="fig|557723.8.peg.1921"/>
<dbReference type="HOGENOM" id="CLU_023208_0_0_6"/>
<dbReference type="Proteomes" id="UP000006743">
    <property type="component" value="Chromosome"/>
</dbReference>
<dbReference type="GO" id="GO:0005737">
    <property type="term" value="C:cytoplasm"/>
    <property type="evidence" value="ECO:0007669"/>
    <property type="project" value="UniProtKB-SubCell"/>
</dbReference>
<dbReference type="GO" id="GO:0005506">
    <property type="term" value="F:iron ion binding"/>
    <property type="evidence" value="ECO:0007669"/>
    <property type="project" value="UniProtKB-UniRule"/>
</dbReference>
<dbReference type="GO" id="GO:0061711">
    <property type="term" value="F:N(6)-L-threonylcarbamoyladenine synthase activity"/>
    <property type="evidence" value="ECO:0007669"/>
    <property type="project" value="UniProtKB-EC"/>
</dbReference>
<dbReference type="GO" id="GO:0002949">
    <property type="term" value="P:tRNA threonylcarbamoyladenosine modification"/>
    <property type="evidence" value="ECO:0007669"/>
    <property type="project" value="UniProtKB-UniRule"/>
</dbReference>
<dbReference type="CDD" id="cd24133">
    <property type="entry name" value="ASKHA_NBD_TsaD_bac"/>
    <property type="match status" value="1"/>
</dbReference>
<dbReference type="FunFam" id="3.30.420.40:FF:000012">
    <property type="entry name" value="tRNA N6-adenosine threonylcarbamoyltransferase"/>
    <property type="match status" value="1"/>
</dbReference>
<dbReference type="FunFam" id="3.30.420.40:FF:000031">
    <property type="entry name" value="tRNA N6-adenosine threonylcarbamoyltransferase"/>
    <property type="match status" value="1"/>
</dbReference>
<dbReference type="Gene3D" id="3.30.420.40">
    <property type="match status" value="2"/>
</dbReference>
<dbReference type="HAMAP" id="MF_01445">
    <property type="entry name" value="TsaD"/>
    <property type="match status" value="1"/>
</dbReference>
<dbReference type="InterPro" id="IPR043129">
    <property type="entry name" value="ATPase_NBD"/>
</dbReference>
<dbReference type="InterPro" id="IPR000905">
    <property type="entry name" value="Gcp-like_dom"/>
</dbReference>
<dbReference type="InterPro" id="IPR017861">
    <property type="entry name" value="KAE1/TsaD"/>
</dbReference>
<dbReference type="InterPro" id="IPR017860">
    <property type="entry name" value="Peptidase_M22_CS"/>
</dbReference>
<dbReference type="InterPro" id="IPR022450">
    <property type="entry name" value="TsaD"/>
</dbReference>
<dbReference type="NCBIfam" id="TIGR00329">
    <property type="entry name" value="gcp_kae1"/>
    <property type="match status" value="1"/>
</dbReference>
<dbReference type="NCBIfam" id="TIGR03723">
    <property type="entry name" value="T6A_TsaD_YgjD"/>
    <property type="match status" value="1"/>
</dbReference>
<dbReference type="PANTHER" id="PTHR11735">
    <property type="entry name" value="TRNA N6-ADENOSINE THREONYLCARBAMOYLTRANSFERASE"/>
    <property type="match status" value="1"/>
</dbReference>
<dbReference type="PANTHER" id="PTHR11735:SF6">
    <property type="entry name" value="TRNA N6-ADENOSINE THREONYLCARBAMOYLTRANSFERASE, MITOCHONDRIAL"/>
    <property type="match status" value="1"/>
</dbReference>
<dbReference type="Pfam" id="PF00814">
    <property type="entry name" value="TsaD"/>
    <property type="match status" value="1"/>
</dbReference>
<dbReference type="PRINTS" id="PR00789">
    <property type="entry name" value="OSIALOPTASE"/>
</dbReference>
<dbReference type="SUPFAM" id="SSF53067">
    <property type="entry name" value="Actin-like ATPase domain"/>
    <property type="match status" value="1"/>
</dbReference>
<dbReference type="PROSITE" id="PS01016">
    <property type="entry name" value="GLYCOPROTEASE"/>
    <property type="match status" value="1"/>
</dbReference>
<sequence length="344" mass="37238">MKILGIETSCDETGVAIYDEDKGLVANQLYSQIEMHADYGGVVPELASRDHIRKTLPLIQEALKEANLTASDIDGVAYTAGPGLVGALLVGSTIARSLAYAWNVPALGVHHMEGHLLAPMLEENAPEFPFVALLVSGGHTQLVDVKNVGEYELLGESIDDAAGEAFDKTAKLLGLDYPGGAALAKLAESGTPNRFTFPRPMTDRPGLDFSFSGLKTFAANTINANLNEKGELEQQTRCDIAYAFQQAVIETLIIKCRRALQQTGYKRLVIAGGVSANKQLRHDLAELMKQIGGEVFYPRPQFCTDNGAMIAYAGFLRLKNGEQTDLSVSVKPRWPMVELCPIDV</sequence>
<name>TSAD_GLAP5</name>
<organism>
    <name type="scientific">Glaesserella parasuis serovar 5 (strain SH0165)</name>
    <name type="common">Haemophilus parasuis</name>
    <dbReference type="NCBI Taxonomy" id="557723"/>
    <lineage>
        <taxon>Bacteria</taxon>
        <taxon>Pseudomonadati</taxon>
        <taxon>Pseudomonadota</taxon>
        <taxon>Gammaproteobacteria</taxon>
        <taxon>Pasteurellales</taxon>
        <taxon>Pasteurellaceae</taxon>
        <taxon>Glaesserella</taxon>
    </lineage>
</organism>
<comment type="function">
    <text evidence="1">Required for the formation of a threonylcarbamoyl group on adenosine at position 37 (t(6)A37) in tRNAs that read codons beginning with adenine. Is involved in the transfer of the threonylcarbamoyl moiety of threonylcarbamoyl-AMP (TC-AMP) to the N6 group of A37, together with TsaE and TsaB. TsaD likely plays a direct catalytic role in this reaction.</text>
</comment>
<comment type="catalytic activity">
    <reaction evidence="1">
        <text>L-threonylcarbamoyladenylate + adenosine(37) in tRNA = N(6)-L-threonylcarbamoyladenosine(37) in tRNA + AMP + H(+)</text>
        <dbReference type="Rhea" id="RHEA:37059"/>
        <dbReference type="Rhea" id="RHEA-COMP:10162"/>
        <dbReference type="Rhea" id="RHEA-COMP:10163"/>
        <dbReference type="ChEBI" id="CHEBI:15378"/>
        <dbReference type="ChEBI" id="CHEBI:73682"/>
        <dbReference type="ChEBI" id="CHEBI:74411"/>
        <dbReference type="ChEBI" id="CHEBI:74418"/>
        <dbReference type="ChEBI" id="CHEBI:456215"/>
        <dbReference type="EC" id="2.3.1.234"/>
    </reaction>
</comment>
<comment type="cofactor">
    <cofactor evidence="1">
        <name>Fe(2+)</name>
        <dbReference type="ChEBI" id="CHEBI:29033"/>
    </cofactor>
    <text evidence="1">Binds 1 Fe(2+) ion per subunit.</text>
</comment>
<comment type="subcellular location">
    <subcellularLocation>
        <location evidence="1">Cytoplasm</location>
    </subcellularLocation>
</comment>
<comment type="similarity">
    <text evidence="1">Belongs to the KAE1 / TsaD family.</text>
</comment>
<reference key="1">
    <citation type="journal article" date="2009" name="J. Bacteriol.">
        <title>Complete genome sequence of Haemophilus parasuis SH0165.</title>
        <authorList>
            <person name="Yue M."/>
            <person name="Yang F."/>
            <person name="Yang J."/>
            <person name="Bei W."/>
            <person name="Cai X."/>
            <person name="Chen L."/>
            <person name="Dong J."/>
            <person name="Zhou R."/>
            <person name="Jin M."/>
            <person name="Jin Q."/>
            <person name="Chen H."/>
        </authorList>
    </citation>
    <scope>NUCLEOTIDE SEQUENCE [LARGE SCALE GENOMIC DNA]</scope>
    <source>
        <strain>SH0165</strain>
    </source>
</reference>
<accession>B8F7W7</accession>
<evidence type="ECO:0000255" key="1">
    <source>
        <dbReference type="HAMAP-Rule" id="MF_01445"/>
    </source>
</evidence>
<protein>
    <recommendedName>
        <fullName evidence="1">tRNA N6-adenosine threonylcarbamoyltransferase</fullName>
        <ecNumber evidence="1">2.3.1.234</ecNumber>
    </recommendedName>
    <alternativeName>
        <fullName evidence="1">N6-L-threonylcarbamoyladenine synthase</fullName>
        <shortName evidence="1">t(6)A synthase</shortName>
    </alternativeName>
    <alternativeName>
        <fullName evidence="1">t(6)A37 threonylcarbamoyladenosine biosynthesis protein TsaD</fullName>
    </alternativeName>
    <alternativeName>
        <fullName evidence="1">tRNA threonylcarbamoyladenosine biosynthesis protein TsaD</fullName>
    </alternativeName>
</protein>